<sequence>MNRLPSSASALACSAHALNLIEKRTLDHEEMKALNREVIKYFKEHVNPGFLEYRKSVTAGGDYGAVEWQAGSLNTLVDTQGQEFIDCLGGFGIFNVGHRNPVVVSAVQNQLAKQPLHSQELLDPLRAMLAKTLAALTPGKLKYSFFCNSGTESVEAALKLAKAYQSPRGKFTFIATSGAFHGKSLGALSATAKSTFRKPFMPLLPGFRHVPFGNIEAMRTALNECKKTGDDVAAVILEPIQGEGGVILPPPGYLTAVRKLCDEFGALMILDEVQTGMGRTGKMFACEHENVQPDILCLAKALGGGVMPIGATIATEEVFSVLFDNPFLHTTTFGGNPLACAAALATINVLLEQNLPAQAEQKGDMLLDGFRQLAREYPDLVQEARGKGMLMAIEFVDNEIGYNFASEMFRQRVLVAGTLNNAKTIRIEPPLTLTIEQCELVIKAARKALAAMRVSVEEA</sequence>
<gene>
    <name evidence="1" type="primary">patA</name>
    <name type="ordered locus">EcHS_A3255</name>
</gene>
<dbReference type="EC" id="2.6.1.82" evidence="1"/>
<dbReference type="EC" id="2.6.1.29" evidence="1"/>
<dbReference type="EMBL" id="CP000802">
    <property type="protein sequence ID" value="ABV07484.1"/>
    <property type="status" value="ALT_INIT"/>
    <property type="molecule type" value="Genomic_DNA"/>
</dbReference>
<dbReference type="RefSeq" id="WP_048902034.1">
    <property type="nucleotide sequence ID" value="NC_009800.1"/>
</dbReference>
<dbReference type="SMR" id="A8A4N0"/>
<dbReference type="KEGG" id="ecx:EcHS_A3255"/>
<dbReference type="HOGENOM" id="CLU_016922_10_0_6"/>
<dbReference type="UniPathway" id="UPA00188">
    <property type="reaction ID" value="UER00290"/>
</dbReference>
<dbReference type="GO" id="GO:0019161">
    <property type="term" value="F:diamine transaminase activity"/>
    <property type="evidence" value="ECO:0007669"/>
    <property type="project" value="UniProtKB-EC"/>
</dbReference>
<dbReference type="GO" id="GO:0042802">
    <property type="term" value="F:identical protein binding"/>
    <property type="evidence" value="ECO:0007669"/>
    <property type="project" value="TreeGrafter"/>
</dbReference>
<dbReference type="GO" id="GO:0033094">
    <property type="term" value="F:putrescine--2-oxoglutarate transaminase activity"/>
    <property type="evidence" value="ECO:0007669"/>
    <property type="project" value="UniProtKB-UniRule"/>
</dbReference>
<dbReference type="GO" id="GO:0030170">
    <property type="term" value="F:pyridoxal phosphate binding"/>
    <property type="evidence" value="ECO:0007669"/>
    <property type="project" value="UniProtKB-UniRule"/>
</dbReference>
<dbReference type="GO" id="GO:0019477">
    <property type="term" value="P:L-lysine catabolic process"/>
    <property type="evidence" value="ECO:0007669"/>
    <property type="project" value="UniProtKB-UniRule"/>
</dbReference>
<dbReference type="GO" id="GO:0009447">
    <property type="term" value="P:putrescine catabolic process"/>
    <property type="evidence" value="ECO:0007669"/>
    <property type="project" value="UniProtKB-UniRule"/>
</dbReference>
<dbReference type="CDD" id="cd00610">
    <property type="entry name" value="OAT_like"/>
    <property type="match status" value="1"/>
</dbReference>
<dbReference type="FunFam" id="3.40.640.10:FF:000004">
    <property type="entry name" value="Acetylornithine aminotransferase"/>
    <property type="match status" value="1"/>
</dbReference>
<dbReference type="Gene3D" id="3.90.1150.10">
    <property type="entry name" value="Aspartate Aminotransferase, domain 1"/>
    <property type="match status" value="1"/>
</dbReference>
<dbReference type="Gene3D" id="3.40.640.10">
    <property type="entry name" value="Type I PLP-dependent aspartate aminotransferase-like (Major domain)"/>
    <property type="match status" value="1"/>
</dbReference>
<dbReference type="HAMAP" id="MF_01276">
    <property type="entry name" value="Putres_aminotrans_3"/>
    <property type="match status" value="1"/>
</dbReference>
<dbReference type="InterPro" id="IPR005814">
    <property type="entry name" value="Aminotrans_3"/>
</dbReference>
<dbReference type="InterPro" id="IPR049704">
    <property type="entry name" value="Aminotrans_3_PPA_site"/>
</dbReference>
<dbReference type="InterPro" id="IPR050103">
    <property type="entry name" value="Class-III_PLP-dep_AT"/>
</dbReference>
<dbReference type="InterPro" id="IPR017747">
    <property type="entry name" value="Putrescine_aminotransferase"/>
</dbReference>
<dbReference type="InterPro" id="IPR015424">
    <property type="entry name" value="PyrdxlP-dep_Trfase"/>
</dbReference>
<dbReference type="InterPro" id="IPR015421">
    <property type="entry name" value="PyrdxlP-dep_Trfase_major"/>
</dbReference>
<dbReference type="InterPro" id="IPR015422">
    <property type="entry name" value="PyrdxlP-dep_Trfase_small"/>
</dbReference>
<dbReference type="NCBIfam" id="NF008570">
    <property type="entry name" value="PRK11522.1"/>
    <property type="match status" value="1"/>
</dbReference>
<dbReference type="NCBIfam" id="TIGR03372">
    <property type="entry name" value="putres_am_tran"/>
    <property type="match status" value="1"/>
</dbReference>
<dbReference type="PANTHER" id="PTHR11986">
    <property type="entry name" value="AMINOTRANSFERASE CLASS III"/>
    <property type="match status" value="1"/>
</dbReference>
<dbReference type="PANTHER" id="PTHR11986:SF112">
    <property type="entry name" value="PUTRESCINE AMINOTRANSFERASE"/>
    <property type="match status" value="1"/>
</dbReference>
<dbReference type="Pfam" id="PF00202">
    <property type="entry name" value="Aminotran_3"/>
    <property type="match status" value="1"/>
</dbReference>
<dbReference type="PIRSF" id="PIRSF000521">
    <property type="entry name" value="Transaminase_4ab_Lys_Orn"/>
    <property type="match status" value="1"/>
</dbReference>
<dbReference type="SUPFAM" id="SSF53383">
    <property type="entry name" value="PLP-dependent transferases"/>
    <property type="match status" value="1"/>
</dbReference>
<dbReference type="PROSITE" id="PS00600">
    <property type="entry name" value="AA_TRANSFER_CLASS_3"/>
    <property type="match status" value="1"/>
</dbReference>
<organism>
    <name type="scientific">Escherichia coli O9:H4 (strain HS)</name>
    <dbReference type="NCBI Taxonomy" id="331112"/>
    <lineage>
        <taxon>Bacteria</taxon>
        <taxon>Pseudomonadati</taxon>
        <taxon>Pseudomonadota</taxon>
        <taxon>Gammaproteobacteria</taxon>
        <taxon>Enterobacterales</taxon>
        <taxon>Enterobacteriaceae</taxon>
        <taxon>Escherichia</taxon>
    </lineage>
</organism>
<name>PAT_ECOHS</name>
<keyword id="KW-0032">Aminotransferase</keyword>
<keyword id="KW-0663">Pyridoxal phosphate</keyword>
<keyword id="KW-0808">Transferase</keyword>
<accession>A8A4N0</accession>
<protein>
    <recommendedName>
        <fullName evidence="1">Putrescine aminotransferase</fullName>
        <shortName evidence="1">PAT</shortName>
        <shortName evidence="1">PATase</shortName>
        <ecNumber evidence="1">2.6.1.82</ecNumber>
    </recommendedName>
    <alternativeName>
        <fullName evidence="1">Cadaverine transaminase</fullName>
    </alternativeName>
    <alternativeName>
        <fullName evidence="1">Diamine transaminase</fullName>
        <ecNumber evidence="1">2.6.1.29</ecNumber>
    </alternativeName>
    <alternativeName>
        <fullName evidence="1">Putrescine transaminase</fullName>
    </alternativeName>
    <alternativeName>
        <fullName evidence="1">Putrescine--2-oxoglutaric acid transaminase</fullName>
    </alternativeName>
</protein>
<feature type="chain" id="PRO_0000379552" description="Putrescine aminotransferase">
    <location>
        <begin position="1"/>
        <end position="459"/>
    </location>
</feature>
<feature type="binding site" description="in other chain" evidence="1">
    <location>
        <begin position="150"/>
        <end position="151"/>
    </location>
    <ligand>
        <name>pyridoxal 5'-phosphate</name>
        <dbReference type="ChEBI" id="CHEBI:597326"/>
        <note>ligand shared between dimeric partners</note>
    </ligand>
</feature>
<feature type="binding site" description="in other chain" evidence="1">
    <location>
        <position position="274"/>
    </location>
    <ligand>
        <name>pyridoxal 5'-phosphate</name>
        <dbReference type="ChEBI" id="CHEBI:597326"/>
        <note>ligand shared between dimeric partners</note>
    </ligand>
</feature>
<feature type="binding site" evidence="1">
    <location>
        <position position="332"/>
    </location>
    <ligand>
        <name>pyridoxal 5'-phosphate</name>
        <dbReference type="ChEBI" id="CHEBI:597326"/>
        <note>ligand shared between dimeric partners</note>
    </ligand>
</feature>
<feature type="modified residue" description="N6-(pyridoxal phosphate)lysine" evidence="1">
    <location>
        <position position="300"/>
    </location>
</feature>
<evidence type="ECO:0000255" key="1">
    <source>
        <dbReference type="HAMAP-Rule" id="MF_01276"/>
    </source>
</evidence>
<evidence type="ECO:0000305" key="2"/>
<proteinExistence type="inferred from homology"/>
<comment type="function">
    <text evidence="1">Catalyzes the aminotransferase reaction from putrescine to 2-oxoglutarate, leading to glutamate and 4-aminobutanal, which spontaneously cyclizes to form 1-pyrroline. This is the first step in one of two pathways for putrescine degradation, where putrescine is converted into 4-aminobutanoate (gamma-aminobutyrate or GABA) via 4-aminobutanal. Also functions as a cadaverine transaminase in a a L-lysine degradation pathway to succinate that proceeds via cadaverine, glutarate and L-2-hydroxyglutarate.</text>
</comment>
<comment type="catalytic activity">
    <reaction evidence="1">
        <text>an alkane-alpha,omega-diamine + 2-oxoglutarate = an omega-aminoaldehyde + L-glutamate</text>
        <dbReference type="Rhea" id="RHEA:18217"/>
        <dbReference type="Rhea" id="RHEA-COMP:9766"/>
        <dbReference type="Rhea" id="RHEA-COMP:12750"/>
        <dbReference type="ChEBI" id="CHEBI:16810"/>
        <dbReference type="ChEBI" id="CHEBI:29985"/>
        <dbReference type="ChEBI" id="CHEBI:70977"/>
        <dbReference type="ChEBI" id="CHEBI:133427"/>
        <dbReference type="EC" id="2.6.1.29"/>
    </reaction>
    <physiologicalReaction direction="left-to-right" evidence="1">
        <dbReference type="Rhea" id="RHEA:18218"/>
    </physiologicalReaction>
</comment>
<comment type="catalytic activity">
    <reaction evidence="1">
        <text>putrescine + 2-oxoglutarate = 1-pyrroline + L-glutamate + H2O</text>
        <dbReference type="Rhea" id="RHEA:12268"/>
        <dbReference type="ChEBI" id="CHEBI:15377"/>
        <dbReference type="ChEBI" id="CHEBI:16810"/>
        <dbReference type="ChEBI" id="CHEBI:29985"/>
        <dbReference type="ChEBI" id="CHEBI:36781"/>
        <dbReference type="ChEBI" id="CHEBI:326268"/>
        <dbReference type="EC" id="2.6.1.82"/>
    </reaction>
    <physiologicalReaction direction="left-to-right" evidence="1">
        <dbReference type="Rhea" id="RHEA:12269"/>
    </physiologicalReaction>
</comment>
<comment type="catalytic activity">
    <reaction evidence="1">
        <text>cadaverine + 2-oxoglutarate = 5-aminopentanal + L-glutamate</text>
        <dbReference type="Rhea" id="RHEA:61624"/>
        <dbReference type="ChEBI" id="CHEBI:16810"/>
        <dbReference type="ChEBI" id="CHEBI:29985"/>
        <dbReference type="ChEBI" id="CHEBI:58384"/>
        <dbReference type="ChEBI" id="CHEBI:144896"/>
    </reaction>
    <physiologicalReaction direction="left-to-right" evidence="1">
        <dbReference type="Rhea" id="RHEA:61625"/>
    </physiologicalReaction>
</comment>
<comment type="cofactor">
    <cofactor evidence="1">
        <name>pyridoxal 5'-phosphate</name>
        <dbReference type="ChEBI" id="CHEBI:597326"/>
    </cofactor>
</comment>
<comment type="pathway">
    <text evidence="1">Amine and polyamine degradation; putrescine degradation; 4-aminobutanal from putrescine (transaminase route): step 1/1.</text>
</comment>
<comment type="similarity">
    <text evidence="1">Belongs to the class-III pyridoxal-phosphate-dependent aminotransferase family. Putrescine aminotransferase subfamily.</text>
</comment>
<comment type="sequence caution" evidence="2">
    <conflict type="erroneous initiation">
        <sequence resource="EMBL-CDS" id="ABV07484"/>
    </conflict>
</comment>
<reference key="1">
    <citation type="journal article" date="2008" name="J. Bacteriol.">
        <title>The pangenome structure of Escherichia coli: comparative genomic analysis of E. coli commensal and pathogenic isolates.</title>
        <authorList>
            <person name="Rasko D.A."/>
            <person name="Rosovitz M.J."/>
            <person name="Myers G.S.A."/>
            <person name="Mongodin E.F."/>
            <person name="Fricke W.F."/>
            <person name="Gajer P."/>
            <person name="Crabtree J."/>
            <person name="Sebaihia M."/>
            <person name="Thomson N.R."/>
            <person name="Chaudhuri R."/>
            <person name="Henderson I.R."/>
            <person name="Sperandio V."/>
            <person name="Ravel J."/>
        </authorList>
    </citation>
    <scope>NUCLEOTIDE SEQUENCE [LARGE SCALE GENOMIC DNA]</scope>
    <source>
        <strain>HS</strain>
    </source>
</reference>